<gene>
    <name evidence="1" type="primary">rapZ</name>
    <name type="ordered locus">Spro_4370</name>
</gene>
<sequence>MVLMIVSGRSGSGKSVALRALEDMGFYCVDNLPVVLLPQLANTLAERNSSAAVSIDVRNMPESPEVFEYAMTQLPDSFSPQLLFLDADRNTLIRRYSDTRRLHPLSSKNLSLESAIDEESDLLEPLRSRADLIIDTSEMSVHELAEMLRTRLLGKRERELTMVFESFGFKHGIPIDADYVFDVRFLPNPHWDPKLRPMTGLDKPVASFLDRHTEVHNFIYQTRSYLEQWLPMLETNNRSYLTVAIGCTGGKHRSVYVAEQLADYFRSRGKNVQSRHRTLEKRKQ</sequence>
<organism>
    <name type="scientific">Serratia proteamaculans (strain 568)</name>
    <dbReference type="NCBI Taxonomy" id="399741"/>
    <lineage>
        <taxon>Bacteria</taxon>
        <taxon>Pseudomonadati</taxon>
        <taxon>Pseudomonadota</taxon>
        <taxon>Gammaproteobacteria</taxon>
        <taxon>Enterobacterales</taxon>
        <taxon>Yersiniaceae</taxon>
        <taxon>Serratia</taxon>
    </lineage>
</organism>
<name>RAPZ_SERP5</name>
<comment type="function">
    <text evidence="1">Modulates the synthesis of GlmS, by affecting the processing and stability of the regulatory small RNA GlmZ. When glucosamine-6-phosphate (GlcN6P) concentrations are high in the cell, RapZ binds GlmZ and targets it to cleavage by RNase E. Consequently, GlmZ is inactivated and unable to activate GlmS synthesis. Under low GlcN6P concentrations, RapZ is sequestered and inactivated by an other regulatory small RNA, GlmY, preventing GlmZ degradation and leading to synthesis of GlmS.</text>
</comment>
<comment type="subunit">
    <text evidence="1">Homotrimer.</text>
</comment>
<comment type="similarity">
    <text evidence="1">Belongs to the RapZ-like family. RapZ subfamily.</text>
</comment>
<keyword id="KW-0067">ATP-binding</keyword>
<keyword id="KW-0342">GTP-binding</keyword>
<keyword id="KW-0547">Nucleotide-binding</keyword>
<keyword id="KW-0694">RNA-binding</keyword>
<proteinExistence type="inferred from homology"/>
<protein>
    <recommendedName>
        <fullName evidence="1">RNase adapter protein RapZ</fullName>
    </recommendedName>
</protein>
<accession>A8GK24</accession>
<feature type="chain" id="PRO_1000061441" description="RNase adapter protein RapZ">
    <location>
        <begin position="1"/>
        <end position="284"/>
    </location>
</feature>
<feature type="region of interest" description="RNA-binding" evidence="1">
    <location>
        <begin position="266"/>
        <end position="284"/>
    </location>
</feature>
<feature type="binding site" evidence="1">
    <location>
        <begin position="8"/>
        <end position="15"/>
    </location>
    <ligand>
        <name>ATP</name>
        <dbReference type="ChEBI" id="CHEBI:30616"/>
    </ligand>
</feature>
<feature type="binding site" evidence="1">
    <location>
        <begin position="56"/>
        <end position="59"/>
    </location>
    <ligand>
        <name>GTP</name>
        <dbReference type="ChEBI" id="CHEBI:37565"/>
    </ligand>
</feature>
<evidence type="ECO:0000255" key="1">
    <source>
        <dbReference type="HAMAP-Rule" id="MF_00636"/>
    </source>
</evidence>
<dbReference type="EMBL" id="CP000826">
    <property type="protein sequence ID" value="ABV43464.1"/>
    <property type="molecule type" value="Genomic_DNA"/>
</dbReference>
<dbReference type="SMR" id="A8GK24"/>
<dbReference type="STRING" id="399741.Spro_4370"/>
<dbReference type="KEGG" id="spe:Spro_4370"/>
<dbReference type="eggNOG" id="COG1660">
    <property type="taxonomic scope" value="Bacteria"/>
</dbReference>
<dbReference type="HOGENOM" id="CLU_059558_1_1_6"/>
<dbReference type="OrthoDB" id="9784461at2"/>
<dbReference type="GO" id="GO:0005524">
    <property type="term" value="F:ATP binding"/>
    <property type="evidence" value="ECO:0007669"/>
    <property type="project" value="UniProtKB-UniRule"/>
</dbReference>
<dbReference type="GO" id="GO:0005525">
    <property type="term" value="F:GTP binding"/>
    <property type="evidence" value="ECO:0007669"/>
    <property type="project" value="UniProtKB-UniRule"/>
</dbReference>
<dbReference type="GO" id="GO:0003723">
    <property type="term" value="F:RNA binding"/>
    <property type="evidence" value="ECO:0007669"/>
    <property type="project" value="UniProtKB-KW"/>
</dbReference>
<dbReference type="HAMAP" id="MF_00636">
    <property type="entry name" value="RapZ_like"/>
    <property type="match status" value="1"/>
</dbReference>
<dbReference type="InterPro" id="IPR027417">
    <property type="entry name" value="P-loop_NTPase"/>
</dbReference>
<dbReference type="InterPro" id="IPR005337">
    <property type="entry name" value="RapZ-like"/>
</dbReference>
<dbReference type="InterPro" id="IPR053930">
    <property type="entry name" value="RapZ-like_N"/>
</dbReference>
<dbReference type="InterPro" id="IPR053931">
    <property type="entry name" value="RapZ_C"/>
</dbReference>
<dbReference type="NCBIfam" id="NF003828">
    <property type="entry name" value="PRK05416.1"/>
    <property type="match status" value="1"/>
</dbReference>
<dbReference type="PANTHER" id="PTHR30448">
    <property type="entry name" value="RNASE ADAPTER PROTEIN RAPZ"/>
    <property type="match status" value="1"/>
</dbReference>
<dbReference type="PANTHER" id="PTHR30448:SF0">
    <property type="entry name" value="RNASE ADAPTER PROTEIN RAPZ"/>
    <property type="match status" value="1"/>
</dbReference>
<dbReference type="Pfam" id="PF22740">
    <property type="entry name" value="PapZ_C"/>
    <property type="match status" value="1"/>
</dbReference>
<dbReference type="Pfam" id="PF03668">
    <property type="entry name" value="RapZ-like_N"/>
    <property type="match status" value="1"/>
</dbReference>
<dbReference type="PIRSF" id="PIRSF005052">
    <property type="entry name" value="P-loopkin"/>
    <property type="match status" value="1"/>
</dbReference>
<dbReference type="SUPFAM" id="SSF52540">
    <property type="entry name" value="P-loop containing nucleoside triphosphate hydrolases"/>
    <property type="match status" value="1"/>
</dbReference>
<reference key="1">
    <citation type="submission" date="2007-09" db="EMBL/GenBank/DDBJ databases">
        <title>Complete sequence of chromosome of Serratia proteamaculans 568.</title>
        <authorList>
            <consortium name="US DOE Joint Genome Institute"/>
            <person name="Copeland A."/>
            <person name="Lucas S."/>
            <person name="Lapidus A."/>
            <person name="Barry K."/>
            <person name="Glavina del Rio T."/>
            <person name="Dalin E."/>
            <person name="Tice H."/>
            <person name="Pitluck S."/>
            <person name="Chain P."/>
            <person name="Malfatti S."/>
            <person name="Shin M."/>
            <person name="Vergez L."/>
            <person name="Schmutz J."/>
            <person name="Larimer F."/>
            <person name="Land M."/>
            <person name="Hauser L."/>
            <person name="Kyrpides N."/>
            <person name="Kim E."/>
            <person name="Taghavi S."/>
            <person name="Newman L."/>
            <person name="Vangronsveld J."/>
            <person name="van der Lelie D."/>
            <person name="Richardson P."/>
        </authorList>
    </citation>
    <scope>NUCLEOTIDE SEQUENCE [LARGE SCALE GENOMIC DNA]</scope>
    <source>
        <strain>568</strain>
    </source>
</reference>